<name>RAB34_MOUSE</name>
<gene>
    <name evidence="9" type="primary">Rab34</name>
    <name type="synonym">Rab39</name>
    <name type="synonym">Rah</name>
    <name type="synonym">Rah1</name>
</gene>
<protein>
    <recommendedName>
        <fullName>Ras-related protein Rab-34</fullName>
        <ecNumber evidence="1">3.6.5.2</ecNumber>
    </recommendedName>
    <alternativeName>
        <fullName>Ras-related homolog</fullName>
    </alternativeName>
    <alternativeName>
        <fullName>Ras-related protein Rab-39</fullName>
    </alternativeName>
    <alternativeName>
        <fullName>Ras-related protein Rah</fullName>
    </alternativeName>
</protein>
<organism>
    <name type="scientific">Mus musculus</name>
    <name type="common">Mouse</name>
    <dbReference type="NCBI Taxonomy" id="10090"/>
    <lineage>
        <taxon>Eukaryota</taxon>
        <taxon>Metazoa</taxon>
        <taxon>Chordata</taxon>
        <taxon>Craniata</taxon>
        <taxon>Vertebrata</taxon>
        <taxon>Euteleostomi</taxon>
        <taxon>Mammalia</taxon>
        <taxon>Eutheria</taxon>
        <taxon>Euarchontoglires</taxon>
        <taxon>Glires</taxon>
        <taxon>Rodentia</taxon>
        <taxon>Myomorpha</taxon>
        <taxon>Muroidea</taxon>
        <taxon>Muridae</taxon>
        <taxon>Murinae</taxon>
        <taxon>Mus</taxon>
        <taxon>Mus</taxon>
    </lineage>
</organism>
<feature type="chain" id="PRO_0000121244" description="Ras-related protein Rab-34">
    <location>
        <begin position="1"/>
        <end position="259"/>
    </location>
</feature>
<feature type="short sequence motif" description="Switch 1" evidence="1">
    <location>
        <begin position="71"/>
        <end position="89"/>
    </location>
</feature>
<feature type="short sequence motif" description="Switch 2" evidence="1">
    <location>
        <begin position="108"/>
        <end position="127"/>
    </location>
</feature>
<feature type="binding site" evidence="1">
    <location>
        <position position="62"/>
    </location>
    <ligand>
        <name>GTP</name>
        <dbReference type="ChEBI" id="CHEBI:37565"/>
    </ligand>
</feature>
<feature type="binding site" evidence="1">
    <location>
        <position position="63"/>
    </location>
    <ligand>
        <name>GTP</name>
        <dbReference type="ChEBI" id="CHEBI:37565"/>
    </ligand>
</feature>
<feature type="binding site" evidence="1">
    <location>
        <position position="64"/>
    </location>
    <ligand>
        <name>GTP</name>
        <dbReference type="ChEBI" id="CHEBI:37565"/>
    </ligand>
</feature>
<feature type="binding site" evidence="1">
    <location>
        <position position="65"/>
    </location>
    <ligand>
        <name>GTP</name>
        <dbReference type="ChEBI" id="CHEBI:37565"/>
    </ligand>
</feature>
<feature type="binding site" evidence="1">
    <location>
        <position position="66"/>
    </location>
    <ligand>
        <name>GTP</name>
        <dbReference type="ChEBI" id="CHEBI:37565"/>
    </ligand>
</feature>
<feature type="binding site" evidence="1">
    <location>
        <position position="66"/>
    </location>
    <ligand>
        <name>Mg(2+)</name>
        <dbReference type="ChEBI" id="CHEBI:18420"/>
    </ligand>
</feature>
<feature type="binding site" evidence="1">
    <location>
        <position position="78"/>
    </location>
    <ligand>
        <name>GTP</name>
        <dbReference type="ChEBI" id="CHEBI:37565"/>
    </ligand>
</feature>
<feature type="binding site" evidence="1">
    <location>
        <position position="81"/>
    </location>
    <ligand>
        <name>GTP</name>
        <dbReference type="ChEBI" id="CHEBI:37565"/>
    </ligand>
</feature>
<feature type="binding site" evidence="1">
    <location>
        <position position="84"/>
    </location>
    <ligand>
        <name>GTP</name>
        <dbReference type="ChEBI" id="CHEBI:37565"/>
    </ligand>
</feature>
<feature type="binding site" evidence="1">
    <location>
        <position position="84"/>
    </location>
    <ligand>
        <name>Mg(2+)</name>
        <dbReference type="ChEBI" id="CHEBI:18420"/>
    </ligand>
</feature>
<feature type="binding site" evidence="1">
    <location>
        <position position="107"/>
    </location>
    <ligand>
        <name>Mg(2+)</name>
        <dbReference type="ChEBI" id="CHEBI:18420"/>
    </ligand>
</feature>
<feature type="binding site" evidence="1">
    <location>
        <position position="110"/>
    </location>
    <ligand>
        <name>GTP</name>
        <dbReference type="ChEBI" id="CHEBI:37565"/>
    </ligand>
</feature>
<feature type="binding site" evidence="1">
    <location>
        <position position="167"/>
    </location>
    <ligand>
        <name>GTP</name>
        <dbReference type="ChEBI" id="CHEBI:37565"/>
    </ligand>
</feature>
<feature type="binding site" evidence="1">
    <location>
        <position position="169"/>
    </location>
    <ligand>
        <name>GTP</name>
        <dbReference type="ChEBI" id="CHEBI:37565"/>
    </ligand>
</feature>
<feature type="binding site" evidence="1">
    <location>
        <position position="198"/>
    </location>
    <ligand>
        <name>GTP</name>
        <dbReference type="ChEBI" id="CHEBI:37565"/>
    </ligand>
</feature>
<feature type="modified residue" description="N-acetylmethionine" evidence="2">
    <location>
        <position position="1"/>
    </location>
</feature>
<feature type="modified residue" description="Phosphoserine" evidence="10 11">
    <location>
        <position position="241"/>
    </location>
</feature>
<feature type="lipid moiety-binding region" description="S-geranylgeranyl cysteine" evidence="3">
    <location>
        <position position="257"/>
    </location>
</feature>
<feature type="lipid moiety-binding region" description="S-geranylgeranyl cysteine" evidence="3">
    <location>
        <position position="258"/>
    </location>
</feature>
<feature type="mutagenesis site" description="Fails to rescue loss of ciliogenesis in RAB34-deficient fibroblasts. Does not localize to cilia." evidence="6 7">
    <original>T</original>
    <variation>N</variation>
    <location>
        <position position="66"/>
    </location>
</feature>
<feature type="mutagenesis site" description="Abolishes interaction with RILP and localization to the peri-Golgi region." evidence="4">
    <original>K</original>
    <variation>Q</variation>
    <location>
        <position position="82"/>
    </location>
</feature>
<feature type="mutagenesis site" description="Does not abolish interaction with RILP and localization to the peri-Golgi region." evidence="4">
    <original>K</original>
    <variation>Y</variation>
    <location>
        <position position="82"/>
    </location>
</feature>
<feature type="mutagenesis site" description="Able to rescue loss of ciliogenesis in RAB34-deficient fibroblasts. Unchanged localization to cilium." evidence="6 7">
    <original>Q</original>
    <variation>L</variation>
    <location>
        <position position="111"/>
    </location>
</feature>
<feature type="mutagenesis site" description="Fails to rescue loss of ciliogenesis in RAB34-deficient fibroblasts." evidence="7">
    <original>CC</original>
    <variation>AA</variation>
    <location>
        <begin position="257"/>
        <end position="258"/>
    </location>
</feature>
<feature type="sequence conflict" description="In Ref. 5; AAB20669." evidence="8" ref="5">
    <original>I</original>
    <variation>N</variation>
    <location>
        <position position="52"/>
    </location>
</feature>
<feature type="sequence conflict" description="In Ref. 3 and 4." evidence="8" ref="3 4">
    <original>DV</original>
    <variation>EL</variation>
    <location>
        <begin position="224"/>
        <end position="225"/>
    </location>
</feature>
<sequence>MNILAPVRRDRVLAELPQCLKKEAALHVRKDFHPRVTCACQEHRTGTVGFKISKVIVVGDLSVGKTCLINRFCKDTFDKNYKATIGVDFEMERFEVLGVPFSLQLWDTAGQERFKCIASTYYRGAQAIIIVFNLNDVASLEHTKQWLTDALKENDPSNVLLFLVGSKKDLSTPAQYSLMEKDALKVAQEIKAEYWAVSSLTGENVREFFFRVAALTFEANVLADVEKSGARHIADVVRINSDDKNLYLTASKKKATCCP</sequence>
<accession>Q64008</accession>
<accession>Q8BHJ0</accession>
<accession>Q99P59</accession>
<accession>Q99P90</accession>
<keyword id="KW-0007">Acetylation</keyword>
<keyword id="KW-0966">Cell projection</keyword>
<keyword id="KW-0970">Cilium biogenesis/degradation</keyword>
<keyword id="KW-0963">Cytoplasm</keyword>
<keyword id="KW-0968">Cytoplasmic vesicle</keyword>
<keyword id="KW-0206">Cytoskeleton</keyword>
<keyword id="KW-0333">Golgi apparatus</keyword>
<keyword id="KW-0342">GTP-binding</keyword>
<keyword id="KW-0378">Hydrolase</keyword>
<keyword id="KW-0449">Lipoprotein</keyword>
<keyword id="KW-0460">Magnesium</keyword>
<keyword id="KW-0472">Membrane</keyword>
<keyword id="KW-0479">Metal-binding</keyword>
<keyword id="KW-0547">Nucleotide-binding</keyword>
<keyword id="KW-0597">Phosphoprotein</keyword>
<keyword id="KW-0636">Prenylation</keyword>
<keyword id="KW-0653">Protein transport</keyword>
<keyword id="KW-1185">Reference proteome</keyword>
<keyword id="KW-0813">Transport</keyword>
<dbReference type="EC" id="3.6.5.2" evidence="1"/>
<dbReference type="EMBL" id="AF322068">
    <property type="protein sequence ID" value="AAK09398.1"/>
    <property type="molecule type" value="mRNA"/>
</dbReference>
<dbReference type="EMBL" id="AF327929">
    <property type="protein sequence ID" value="AAK11241.1"/>
    <property type="molecule type" value="mRNA"/>
</dbReference>
<dbReference type="EMBL" id="AB082927">
    <property type="protein sequence ID" value="BAC16803.1"/>
    <property type="molecule type" value="mRNA"/>
</dbReference>
<dbReference type="EMBL" id="BC038638">
    <property type="protein sequence ID" value="AAH38638.1"/>
    <property type="molecule type" value="mRNA"/>
</dbReference>
<dbReference type="EMBL" id="S72304">
    <property type="protein sequence ID" value="AAB20669.1"/>
    <property type="molecule type" value="mRNA"/>
</dbReference>
<dbReference type="CCDS" id="CCDS25094.1"/>
<dbReference type="PIR" id="A41636">
    <property type="entry name" value="A41636"/>
</dbReference>
<dbReference type="RefSeq" id="NP_001152954.1">
    <property type="nucleotide sequence ID" value="NM_001159482.1"/>
</dbReference>
<dbReference type="RefSeq" id="NP_258436.2">
    <property type="nucleotide sequence ID" value="NM_033475.3"/>
</dbReference>
<dbReference type="SMR" id="Q64008"/>
<dbReference type="BioGRID" id="202576">
    <property type="interactions" value="7"/>
</dbReference>
<dbReference type="FunCoup" id="Q64008">
    <property type="interactions" value="740"/>
</dbReference>
<dbReference type="IntAct" id="Q64008">
    <property type="interactions" value="7"/>
</dbReference>
<dbReference type="STRING" id="10090.ENSMUSP00000103958"/>
<dbReference type="iPTMnet" id="Q64008"/>
<dbReference type="PhosphoSitePlus" id="Q64008"/>
<dbReference type="SwissPalm" id="Q64008"/>
<dbReference type="jPOST" id="Q64008"/>
<dbReference type="PaxDb" id="10090-ENSMUSP00000103958"/>
<dbReference type="ProteomicsDB" id="300379"/>
<dbReference type="Pumba" id="Q64008"/>
<dbReference type="DNASU" id="19376"/>
<dbReference type="GeneID" id="19376"/>
<dbReference type="KEGG" id="mmu:19376"/>
<dbReference type="AGR" id="MGI:104606"/>
<dbReference type="CTD" id="83871"/>
<dbReference type="MGI" id="MGI:104606">
    <property type="gene designation" value="Rab34"/>
</dbReference>
<dbReference type="eggNOG" id="KOG0094">
    <property type="taxonomic scope" value="Eukaryota"/>
</dbReference>
<dbReference type="InParanoid" id="Q64008"/>
<dbReference type="OrthoDB" id="8143at9989"/>
<dbReference type="PhylomeDB" id="Q64008"/>
<dbReference type="Reactome" id="R-MMU-8873719">
    <property type="pathway name" value="RAB geranylgeranylation"/>
</dbReference>
<dbReference type="BioGRID-ORCS" id="19376">
    <property type="hits" value="6 hits in 76 CRISPR screens"/>
</dbReference>
<dbReference type="ChiTaRS" id="Rab34">
    <property type="organism name" value="mouse"/>
</dbReference>
<dbReference type="PRO" id="PR:Q64008"/>
<dbReference type="Proteomes" id="UP000000589">
    <property type="component" value="Unplaced"/>
</dbReference>
<dbReference type="RNAct" id="Q64008">
    <property type="molecule type" value="protein"/>
</dbReference>
<dbReference type="GO" id="GO:0005814">
    <property type="term" value="C:centriole"/>
    <property type="evidence" value="ECO:0000250"/>
    <property type="project" value="UniProtKB"/>
</dbReference>
<dbReference type="GO" id="GO:0005813">
    <property type="term" value="C:centrosome"/>
    <property type="evidence" value="ECO:0007669"/>
    <property type="project" value="UniProtKB-SubCell"/>
</dbReference>
<dbReference type="GO" id="GO:0005929">
    <property type="term" value="C:cilium"/>
    <property type="evidence" value="ECO:0007669"/>
    <property type="project" value="UniProtKB-SubCell"/>
</dbReference>
<dbReference type="GO" id="GO:0031410">
    <property type="term" value="C:cytoplasmic vesicle"/>
    <property type="evidence" value="ECO:0000314"/>
    <property type="project" value="ParkinsonsUK-UCL"/>
</dbReference>
<dbReference type="GO" id="GO:0005769">
    <property type="term" value="C:early endosome"/>
    <property type="evidence" value="ECO:0000314"/>
    <property type="project" value="MGI"/>
</dbReference>
<dbReference type="GO" id="GO:0005794">
    <property type="term" value="C:Golgi apparatus"/>
    <property type="evidence" value="ECO:0000314"/>
    <property type="project" value="ParkinsonsUK-UCL"/>
</dbReference>
<dbReference type="GO" id="GO:0005770">
    <property type="term" value="C:late endosome"/>
    <property type="evidence" value="ECO:0000314"/>
    <property type="project" value="ParkinsonsUK-UCL"/>
</dbReference>
<dbReference type="GO" id="GO:0045335">
    <property type="term" value="C:phagocytic vesicle"/>
    <property type="evidence" value="ECO:0000250"/>
    <property type="project" value="UniProtKB"/>
</dbReference>
<dbReference type="GO" id="GO:0030670">
    <property type="term" value="C:phagocytic vesicle membrane"/>
    <property type="evidence" value="ECO:0007669"/>
    <property type="project" value="UniProtKB-SubCell"/>
</dbReference>
<dbReference type="GO" id="GO:0001726">
    <property type="term" value="C:ruffle"/>
    <property type="evidence" value="ECO:0000314"/>
    <property type="project" value="MGI"/>
</dbReference>
<dbReference type="GO" id="GO:0005525">
    <property type="term" value="F:GTP binding"/>
    <property type="evidence" value="ECO:0007669"/>
    <property type="project" value="UniProtKB-KW"/>
</dbReference>
<dbReference type="GO" id="GO:0003924">
    <property type="term" value="F:GTPase activity"/>
    <property type="evidence" value="ECO:0000314"/>
    <property type="project" value="MGI"/>
</dbReference>
<dbReference type="GO" id="GO:0019001">
    <property type="term" value="F:guanyl nucleotide binding"/>
    <property type="evidence" value="ECO:0000314"/>
    <property type="project" value="MGI"/>
</dbReference>
<dbReference type="GO" id="GO:0060271">
    <property type="term" value="P:cilium assembly"/>
    <property type="evidence" value="ECO:0000250"/>
    <property type="project" value="UniProtKB"/>
</dbReference>
<dbReference type="GO" id="GO:0061824">
    <property type="term" value="P:cytosolic ciliogenesis"/>
    <property type="evidence" value="ECO:0000315"/>
    <property type="project" value="UniProtKB"/>
</dbReference>
<dbReference type="GO" id="GO:0006897">
    <property type="term" value="P:endocytosis"/>
    <property type="evidence" value="ECO:0000314"/>
    <property type="project" value="MGI"/>
</dbReference>
<dbReference type="GO" id="GO:0043001">
    <property type="term" value="P:Golgi to plasma membrane protein transport"/>
    <property type="evidence" value="ECO:0000316"/>
    <property type="project" value="UniProtKB"/>
</dbReference>
<dbReference type="GO" id="GO:0007041">
    <property type="term" value="P:lysosomal transport"/>
    <property type="evidence" value="ECO:0000314"/>
    <property type="project" value="ParkinsonsUK-UCL"/>
</dbReference>
<dbReference type="GO" id="GO:0090382">
    <property type="term" value="P:phagosome maturation"/>
    <property type="evidence" value="ECO:0000250"/>
    <property type="project" value="UniProtKB"/>
</dbReference>
<dbReference type="GO" id="GO:0090385">
    <property type="term" value="P:phagosome-lysosome fusion"/>
    <property type="evidence" value="ECO:0000315"/>
    <property type="project" value="ParkinsonsUK-UCL"/>
</dbReference>
<dbReference type="GO" id="GO:1900426">
    <property type="term" value="P:positive regulation of defense response to bacterium"/>
    <property type="evidence" value="ECO:0000314"/>
    <property type="project" value="ParkinsonsUK-UCL"/>
</dbReference>
<dbReference type="GO" id="GO:1905171">
    <property type="term" value="P:positive regulation of protein localization to phagocytic vesicle"/>
    <property type="evidence" value="ECO:0000315"/>
    <property type="project" value="ParkinsonsUK-UCL"/>
</dbReference>
<dbReference type="GO" id="GO:0045880">
    <property type="term" value="P:positive regulation of smoothened signaling pathway"/>
    <property type="evidence" value="ECO:0000315"/>
    <property type="project" value="UniProtKB"/>
</dbReference>
<dbReference type="CDD" id="cd04108">
    <property type="entry name" value="Rab36_Rab34"/>
    <property type="match status" value="1"/>
</dbReference>
<dbReference type="FunFam" id="3.40.50.300:FF:000748">
    <property type="entry name" value="ras-related protein Rab-34 isoform X2"/>
    <property type="match status" value="1"/>
</dbReference>
<dbReference type="Gene3D" id="3.40.50.300">
    <property type="entry name" value="P-loop containing nucleotide triphosphate hydrolases"/>
    <property type="match status" value="1"/>
</dbReference>
<dbReference type="InterPro" id="IPR027417">
    <property type="entry name" value="P-loop_NTPase"/>
</dbReference>
<dbReference type="InterPro" id="IPR050227">
    <property type="entry name" value="Rab"/>
</dbReference>
<dbReference type="InterPro" id="IPR005225">
    <property type="entry name" value="Small_GTP-bd"/>
</dbReference>
<dbReference type="InterPro" id="IPR001806">
    <property type="entry name" value="Small_GTPase"/>
</dbReference>
<dbReference type="NCBIfam" id="TIGR00231">
    <property type="entry name" value="small_GTP"/>
    <property type="match status" value="1"/>
</dbReference>
<dbReference type="PANTHER" id="PTHR47977">
    <property type="entry name" value="RAS-RELATED PROTEIN RAB"/>
    <property type="match status" value="1"/>
</dbReference>
<dbReference type="Pfam" id="PF00071">
    <property type="entry name" value="Ras"/>
    <property type="match status" value="1"/>
</dbReference>
<dbReference type="PRINTS" id="PR00449">
    <property type="entry name" value="RASTRNSFRMNG"/>
</dbReference>
<dbReference type="SMART" id="SM00175">
    <property type="entry name" value="RAB"/>
    <property type="match status" value="1"/>
</dbReference>
<dbReference type="SMART" id="SM00176">
    <property type="entry name" value="RAN"/>
    <property type="match status" value="1"/>
</dbReference>
<dbReference type="SMART" id="SM00173">
    <property type="entry name" value="RAS"/>
    <property type="match status" value="1"/>
</dbReference>
<dbReference type="SMART" id="SM00174">
    <property type="entry name" value="RHO"/>
    <property type="match status" value="1"/>
</dbReference>
<dbReference type="SUPFAM" id="SSF52540">
    <property type="entry name" value="P-loop containing nucleoside triphosphate hydrolases"/>
    <property type="match status" value="1"/>
</dbReference>
<dbReference type="PROSITE" id="PS51419">
    <property type="entry name" value="RAB"/>
    <property type="match status" value="1"/>
</dbReference>
<comment type="function">
    <text evidence="1 2 4 5 6 7">The small GTPases Rab are key regulators of intracellular membrane trafficking, from the formation of transport vesicles to their fusion with membranes (By similarity). Rabs cycle between an inactive GDP-bound form and an active GTP-bound form that is able to recruit to membranes different sets of downstream effectors directly responsible for vesicle formation, movement, tethering and fusion (By similarity). RAB34 transports protein involved in the redistribution of lysosomes to the peri-Golgi region (PubMed:12475955). Plays a role in the maturation of phagosomes that engulf pathogens, such as S.aureus and M.tuberculosis (By similarity). Plays a role in the fusion of phagosomes with lysosomes (By similarity). Required for the early steps of intracellular ciliogenesis, the cilium assembly pathway initiated by trafficking and docking of ciliary vesicles to the centrioles in the cytoplasm, followed by axoneme formation in the cytoplasm. After axoneme elongation, the centrioles migrate close to the cell surface so that ciliary vesicles can fuse with the plasma membrane to expose cilia to the extracellular space (PubMed:30301781, PubMed:33989524). It seems dispensable for ciliogenesis via the extracellular pathway where cilium assembly begins after migration and docking of the centriole to the plasma membrane (PubMed:33989524). Also acts as a positive regulator of hedgehog signaling and regulates ciliary function (PubMed:29290584).</text>
</comment>
<comment type="catalytic activity">
    <reaction evidence="1">
        <text>GTP + H2O = GDP + phosphate + H(+)</text>
        <dbReference type="Rhea" id="RHEA:19669"/>
        <dbReference type="ChEBI" id="CHEBI:15377"/>
        <dbReference type="ChEBI" id="CHEBI:15378"/>
        <dbReference type="ChEBI" id="CHEBI:37565"/>
        <dbReference type="ChEBI" id="CHEBI:43474"/>
        <dbReference type="ChEBI" id="CHEBI:58189"/>
        <dbReference type="EC" id="3.6.5.2"/>
    </reaction>
    <physiologicalReaction direction="left-to-right" evidence="1">
        <dbReference type="Rhea" id="RHEA:19670"/>
    </physiologicalReaction>
</comment>
<comment type="cofactor">
    <cofactor evidence="1">
        <name>Mg(2+)</name>
        <dbReference type="ChEBI" id="CHEBI:18420"/>
    </cofactor>
</comment>
<comment type="activity regulation">
    <text evidence="8">Regulated by guanine nucleotide exchange factors (GEFs) which promote the exchange of bound GDP for free GTP. Regulated by GTPase activating proteins (GAPs) which increase the GTP hydrolysis activity. Inhibited by GDP dissociation inhibitors (GDIs).</text>
</comment>
<comment type="subunit">
    <text evidence="2 4">Interacts with RILP. The GTP-bound form interacts with REP15 (By similarity).</text>
</comment>
<comment type="subcellular location">
    <subcellularLocation>
        <location evidence="4">Cytoplasm</location>
    </subcellularLocation>
    <subcellularLocation>
        <location evidence="4 7">Golgi apparatus</location>
    </subcellularLocation>
    <subcellularLocation>
        <location evidence="2">Cytoplasmic vesicle</location>
        <location evidence="2">Phagosome</location>
    </subcellularLocation>
    <subcellularLocation>
        <location evidence="2">Cytoplasmic vesicle</location>
        <location evidence="2">Phagosome membrane</location>
        <topology evidence="2">Lipid-anchor</topology>
        <orientation evidence="2">Cytoplasmic side</orientation>
    </subcellularLocation>
    <subcellularLocation>
        <location evidence="5 6 7">Cell projection</location>
        <location evidence="5 6 7">Cilium</location>
    </subcellularLocation>
    <subcellularLocation>
        <location evidence="2">Cytoplasm</location>
        <location evidence="2">Cytoskeleton</location>
        <location evidence="2">Microtubule organizing center</location>
        <location evidence="2">Centrosome</location>
        <location evidence="2">Centriole</location>
    </subcellularLocation>
    <subcellularLocation>
        <location evidence="7">Cytoplasm</location>
        <location evidence="7">Cytoskeleton</location>
        <location evidence="7">Microtubule organizing center</location>
        <location evidence="7">Centrosome</location>
    </subcellularLocation>
    <text evidence="2">Recruited to phagosomes containing S.aureus or Mycobacterium.</text>
</comment>
<comment type="domain">
    <text evidence="1">Switch 1, switch 2 and the interswitch regions are characteristic of Rab GTPases and mediate the interactions with Rab downstream effectors. The switch regions undergo conformational changes upon nucleotide binding which drives interaction with specific sets of effector proteins, with most effectors only binding to GTP-bound Rab.</text>
</comment>
<comment type="disruption phenotype">
    <text evidence="6">RAB34-deficient embryos display polydactyly, and cleft lip and palate.</text>
</comment>
<comment type="similarity">
    <text evidence="8">Belongs to the small GTPase superfamily. Rab family.</text>
</comment>
<evidence type="ECO:0000250" key="1">
    <source>
        <dbReference type="UniProtKB" id="P20340"/>
    </source>
</evidence>
<evidence type="ECO:0000250" key="2">
    <source>
        <dbReference type="UniProtKB" id="Q9BZG1"/>
    </source>
</evidence>
<evidence type="ECO:0000255" key="3"/>
<evidence type="ECO:0000269" key="4">
    <source>
    </source>
</evidence>
<evidence type="ECO:0000269" key="5">
    <source>
    </source>
</evidence>
<evidence type="ECO:0000269" key="6">
    <source>
    </source>
</evidence>
<evidence type="ECO:0000269" key="7">
    <source>
    </source>
</evidence>
<evidence type="ECO:0000305" key="8"/>
<evidence type="ECO:0000312" key="9">
    <source>
        <dbReference type="MGI" id="MGI:104606"/>
    </source>
</evidence>
<evidence type="ECO:0007744" key="10">
    <source>
    </source>
</evidence>
<evidence type="ECO:0007744" key="11">
    <source>
    </source>
</evidence>
<proteinExistence type="evidence at protein level"/>
<reference key="1">
    <citation type="submission" date="2000-11" db="EMBL/GenBank/DDBJ databases">
        <title>Mouse Rab39 coding region (cDNA).</title>
        <authorList>
            <person name="Hong W."/>
        </authorList>
    </citation>
    <scope>NUCLEOTIDE SEQUENCE [MRNA]</scope>
    <source>
        <strain>C57BL/6J</strain>
    </source>
</reference>
<reference key="2">
    <citation type="submission" date="2000-12" db="EMBL/GenBank/DDBJ databases">
        <title>Full length sequence of Rah, a novel member of the Rab family of small GTPases.</title>
        <authorList>
            <person name="Hari M."/>
            <person name="Morimoto B.H."/>
            <person name="Asai D.J."/>
        </authorList>
    </citation>
    <scope>NUCLEOTIDE SEQUENCE [MRNA]</scope>
    <source>
        <tissue>Neuron</tissue>
    </source>
</reference>
<reference key="3">
    <citation type="submission" date="2002-03" db="EMBL/GenBank/DDBJ databases">
        <title>Rah, a Rab family small GTPase.</title>
        <authorList>
            <person name="Sun P."/>
            <person name="Yamamoto H."/>
            <person name="Endo T."/>
        </authorList>
    </citation>
    <scope>NUCLEOTIDE SEQUENCE [MRNA]</scope>
</reference>
<reference key="4">
    <citation type="journal article" date="2004" name="Genome Res.">
        <title>The status, quality, and expansion of the NIH full-length cDNA project: the Mammalian Gene Collection (MGC).</title>
        <authorList>
            <consortium name="The MGC Project Team"/>
        </authorList>
    </citation>
    <scope>NUCLEOTIDE SEQUENCE [LARGE SCALE MRNA]</scope>
    <source>
        <strain>Czech II</strain>
        <tissue>Lung</tissue>
    </source>
</reference>
<reference key="5">
    <citation type="journal article" date="1991" name="Genes Dev.">
        <title>Molecular cloning of a member of a new class of low-molecular-weight GTP-binding proteins.</title>
        <authorList>
            <person name="Morimoto B.H."/>
            <person name="Chuang C.-C."/>
            <person name="Koshland D.E. Jr."/>
        </authorList>
    </citation>
    <scope>NUCLEOTIDE SEQUENCE [MRNA] OF 52-259</scope>
    <source>
        <tissue>Neuron</tissue>
    </source>
</reference>
<reference key="6">
    <citation type="journal article" date="2002" name="Mol. Biol. Cell">
        <title>Interorganellar regulation of lysosome positioning by the Golgi apparatus through Rab34 interaction with Rab-interacting lysosomal protein.</title>
        <authorList>
            <person name="Wang T."/>
            <person name="Hong W."/>
        </authorList>
    </citation>
    <scope>FUNCTION IN LYSOSOME REDISTRIBUTION</scope>
    <scope>INTERACTION WITH RILP</scope>
    <scope>MUTAGENESIS OF LYS-82</scope>
    <scope>SUBCELLULAR LOCATION</scope>
</reference>
<reference key="7">
    <citation type="journal article" date="2009" name="Immunity">
        <title>The phagosomal proteome in interferon-gamma-activated macrophages.</title>
        <authorList>
            <person name="Trost M."/>
            <person name="English L."/>
            <person name="Lemieux S."/>
            <person name="Courcelles M."/>
            <person name="Desjardins M."/>
            <person name="Thibault P."/>
        </authorList>
    </citation>
    <scope>PHOSPHORYLATION [LARGE SCALE ANALYSIS] AT SER-241</scope>
    <scope>IDENTIFICATION BY MASS SPECTROMETRY [LARGE SCALE ANALYSIS]</scope>
</reference>
<reference key="8">
    <citation type="journal article" date="2010" name="Cell">
        <title>A tissue-specific atlas of mouse protein phosphorylation and expression.</title>
        <authorList>
            <person name="Huttlin E.L."/>
            <person name="Jedrychowski M.P."/>
            <person name="Elias J.E."/>
            <person name="Goswami T."/>
            <person name="Rad R."/>
            <person name="Beausoleil S.A."/>
            <person name="Villen J."/>
            <person name="Haas W."/>
            <person name="Sowa M.E."/>
            <person name="Gygi S.P."/>
        </authorList>
    </citation>
    <scope>PHOSPHORYLATION [LARGE SCALE ANALYSIS] AT SER-241</scope>
    <scope>IDENTIFICATION BY MASS SPECTROMETRY [LARGE SCALE ANALYSIS]</scope>
    <source>
        <tissue>Brain</tissue>
        <tissue>Brown adipose tissue</tissue>
        <tissue>Kidney</tissue>
        <tissue>Lung</tissue>
        <tissue>Testis</tissue>
    </source>
</reference>
<reference key="9">
    <citation type="journal article" date="2018" name="Dev. Cell">
        <title>CRISPR screens uncover genes that regulate target cell sensitivity to the morphogen sonic hedgehog.</title>
        <authorList>
            <person name="Pusapati G.V."/>
            <person name="Kong J.H."/>
            <person name="Patel B.B."/>
            <person name="Krishnan A."/>
            <person name="Sagner A."/>
            <person name="Kinnebrew M."/>
            <person name="Briscoe J."/>
            <person name="Aravind L."/>
            <person name="Rohatgi R."/>
        </authorList>
    </citation>
    <scope>FUNCTION</scope>
    <scope>SUBCELLULAR LOCATION</scope>
</reference>
<reference key="10">
    <citation type="journal article" date="2018" name="J. Cell Sci.">
        <title>Rab34 small GTPase is required for Hedgehog signaling and an early step of ciliary vesicle formation in mouse.</title>
        <authorList>
            <person name="Xu S."/>
            <person name="Liu Y."/>
            <person name="Meng Q."/>
            <person name="Wang B."/>
        </authorList>
    </citation>
    <scope>FUNCTION</scope>
    <scope>SUBCELLULAR LOCATION</scope>
    <scope>MUTAGENESIS OF THR-66 AND GLN-111</scope>
    <scope>DISRUPTION PHENOTYPE</scope>
</reference>
<reference key="11">
    <citation type="journal article" date="2021" name="Curr. Biol.">
        <title>Rab34 is necessary for early stages of intracellular ciliogenesis.</title>
        <authorList>
            <person name="Stuck M.W."/>
            <person name="Chong W.M."/>
            <person name="Liao J.C."/>
            <person name="Pazour G.J."/>
        </authorList>
    </citation>
    <scope>FUNCTION</scope>
    <scope>SUBCELLULAR LOCATION</scope>
    <scope>MUTAGENESIS OF THR-66; GLN-111 AND 257-CYS-CYS-258</scope>
</reference>